<organism>
    <name type="scientific">Pyrococcus furiosus (strain ATCC 43587 / DSM 3638 / JCM 8422 / Vc1)</name>
    <dbReference type="NCBI Taxonomy" id="186497"/>
    <lineage>
        <taxon>Archaea</taxon>
        <taxon>Methanobacteriati</taxon>
        <taxon>Methanobacteriota</taxon>
        <taxon>Thermococci</taxon>
        <taxon>Thermococcales</taxon>
        <taxon>Thermococcaceae</taxon>
        <taxon>Pyrococcus</taxon>
    </lineage>
</organism>
<reference key="1">
    <citation type="journal article" date="1999" name="Genetics">
        <title>Divergence of the hyperthermophilic archaea Pyrococcus furiosus and P. horikoshii inferred from complete genomic sequences.</title>
        <authorList>
            <person name="Maeder D.L."/>
            <person name="Weiss R.B."/>
            <person name="Dunn D.M."/>
            <person name="Cherry J.L."/>
            <person name="Gonzalez J.M."/>
            <person name="DiRuggiero J."/>
            <person name="Robb F.T."/>
        </authorList>
    </citation>
    <scope>NUCLEOTIDE SEQUENCE [LARGE SCALE GENOMIC DNA]</scope>
    <source>
        <strain>ATCC 43587 / DSM 3638 / JCM 8422 / Vc1</strain>
    </source>
</reference>
<reference key="2">
    <citation type="journal article" date="2010" name="RNA">
        <title>Binding and cleavage of CRISPR RNA by Cas6.</title>
        <authorList>
            <person name="Carte J."/>
            <person name="Pfister N.T."/>
            <person name="Compton M.M."/>
            <person name="Terns R.M."/>
            <person name="Terns M.P."/>
        </authorList>
    </citation>
    <scope>FUNCTION AS AN ENDORIBONUCLEASE</scope>
    <scope>RNA-BINDING</scope>
    <scope>COFACTOR</scope>
    <scope>ACTIVE SITE</scope>
    <scope>MUTAGENESIS OF TYR-31; HIS-46 AND LYS-52</scope>
    <source>
        <strain>ATCC 43587 / DSM 3638 / JCM 8422 / Vc1</strain>
    </source>
</reference>
<reference key="3">
    <citation type="journal article" date="2008" name="Genes Dev.">
        <title>Cas6 is an endoribonuclease that generates guide RNAs for invader defense in prokaryotes.</title>
        <authorList>
            <person name="Carte J."/>
            <person name="Wang R."/>
            <person name="Li H."/>
            <person name="Terns R.M."/>
            <person name="Terns M.P."/>
        </authorList>
    </citation>
    <scope>X-RAY CRYSTALLOGRAPHY (2.25 ANGSTROMS) OF 2-264</scope>
    <scope>FUNCTION AS AN ENDORIBONUCLEASE</scope>
    <scope>COFACTOR</scope>
    <scope>BIOPHYSICOCHEMICAL PROPERTIES</scope>
    <scope>RNA-BINDING</scope>
    <source>
        <strain>ATCC 43587 / DSM 3638 / JCM 8422 / Vc1</strain>
    </source>
</reference>
<reference key="4">
    <citation type="journal article" date="2011" name="Structure">
        <title>Interaction of the Cas6 riboendonuclease with CRISPR RNAs: recognition and cleavage.</title>
        <authorList>
            <person name="Wang R."/>
            <person name="Preamplume G."/>
            <person name="Terns M.P."/>
            <person name="Terns R.M."/>
            <person name="Li H."/>
        </authorList>
    </citation>
    <scope>X-RAY CRYSTALLOGRAPHY (3.10 ANGSTROMS) OF 2-264 IN COMPLEX WITH RNA</scope>
</reference>
<dbReference type="EC" id="3.1.-.-"/>
<dbReference type="EMBL" id="AE009950">
    <property type="protein sequence ID" value="AAL81255.1"/>
    <property type="molecule type" value="Genomic_DNA"/>
</dbReference>
<dbReference type="RefSeq" id="WP_011012271.1">
    <property type="nucleotide sequence ID" value="NC_003413.1"/>
</dbReference>
<dbReference type="PDB" id="3I4H">
    <property type="method" value="X-ray"/>
    <property type="resolution" value="2.25 A"/>
    <property type="chains" value="X=2-264"/>
</dbReference>
<dbReference type="PDB" id="3PKM">
    <property type="method" value="X-ray"/>
    <property type="resolution" value="3.10 A"/>
    <property type="chains" value="A/X=2-264"/>
</dbReference>
<dbReference type="PDBsum" id="3I4H"/>
<dbReference type="PDBsum" id="3PKM"/>
<dbReference type="SMR" id="Q8U1S4"/>
<dbReference type="STRING" id="186497.PF1131"/>
<dbReference type="PaxDb" id="186497-PF1131"/>
<dbReference type="GeneID" id="1469000"/>
<dbReference type="KEGG" id="pfu:PF1131"/>
<dbReference type="PATRIC" id="fig|186497.12.peg.1192"/>
<dbReference type="eggNOG" id="arCOG04342">
    <property type="taxonomic scope" value="Archaea"/>
</dbReference>
<dbReference type="HOGENOM" id="CLU_089858_1_1_2"/>
<dbReference type="OrthoDB" id="43942at2157"/>
<dbReference type="PhylomeDB" id="Q8U1S4"/>
<dbReference type="EvolutionaryTrace" id="Q8U1S4"/>
<dbReference type="Proteomes" id="UP000001013">
    <property type="component" value="Chromosome"/>
</dbReference>
<dbReference type="GO" id="GO:0004519">
    <property type="term" value="F:endonuclease activity"/>
    <property type="evidence" value="ECO:0007669"/>
    <property type="project" value="UniProtKB-KW"/>
</dbReference>
<dbReference type="GO" id="GO:0003723">
    <property type="term" value="F:RNA binding"/>
    <property type="evidence" value="ECO:0007669"/>
    <property type="project" value="UniProtKB-KW"/>
</dbReference>
<dbReference type="GO" id="GO:0051607">
    <property type="term" value="P:defense response to virus"/>
    <property type="evidence" value="ECO:0007669"/>
    <property type="project" value="UniProtKB-KW"/>
</dbReference>
<dbReference type="GO" id="GO:0043571">
    <property type="term" value="P:maintenance of CRISPR repeat elements"/>
    <property type="evidence" value="ECO:0000314"/>
    <property type="project" value="CACAO"/>
</dbReference>
<dbReference type="CDD" id="cd09759">
    <property type="entry name" value="Cas6_I-A"/>
    <property type="match status" value="1"/>
</dbReference>
<dbReference type="Gene3D" id="3.30.70.1890">
    <property type="match status" value="1"/>
</dbReference>
<dbReference type="Gene3D" id="3.30.70.1900">
    <property type="match status" value="1"/>
</dbReference>
<dbReference type="InterPro" id="IPR049435">
    <property type="entry name" value="Cas_Cas6_C"/>
</dbReference>
<dbReference type="InterPro" id="IPR010156">
    <property type="entry name" value="CRISPR-assoc_prot_Cas6"/>
</dbReference>
<dbReference type="InterPro" id="IPR045747">
    <property type="entry name" value="CRISPR-assoc_prot_Cas6_N_sf"/>
</dbReference>
<dbReference type="NCBIfam" id="TIGR01877">
    <property type="entry name" value="cas_cas6"/>
    <property type="match status" value="1"/>
</dbReference>
<dbReference type="PANTHER" id="PTHR36984">
    <property type="entry name" value="CRISPR-ASSOCIATED ENDORIBONUCLEASE CAS6 1"/>
    <property type="match status" value="1"/>
</dbReference>
<dbReference type="PANTHER" id="PTHR36984:SF1">
    <property type="entry name" value="CRISPR-ASSOCIATED ENDORIBONUCLEASE CAS6 1"/>
    <property type="match status" value="1"/>
</dbReference>
<dbReference type="Pfam" id="PF21350">
    <property type="entry name" value="Cas6_I-A"/>
    <property type="match status" value="1"/>
</dbReference>
<dbReference type="Pfam" id="PF01881">
    <property type="entry name" value="Cas_Cas6_C"/>
    <property type="match status" value="1"/>
</dbReference>
<dbReference type="PIRSF" id="PIRSF005054">
    <property type="entry name" value="PF1131"/>
    <property type="match status" value="1"/>
</dbReference>
<gene>
    <name type="primary">cas6</name>
    <name type="ordered locus">PF1131</name>
</gene>
<evidence type="ECO:0000269" key="1">
    <source>
    </source>
</evidence>
<evidence type="ECO:0000269" key="2">
    <source>
    </source>
</evidence>
<evidence type="ECO:0000269" key="3">
    <source>
    </source>
</evidence>
<evidence type="ECO:0000305" key="4"/>
<evidence type="ECO:0000305" key="5">
    <source>
    </source>
</evidence>
<evidence type="ECO:0007829" key="6">
    <source>
        <dbReference type="PDB" id="3I4H"/>
    </source>
</evidence>
<evidence type="ECO:0007829" key="7">
    <source>
        <dbReference type="PDB" id="3PKM"/>
    </source>
</evidence>
<keyword id="KW-0002">3D-structure</keyword>
<keyword id="KW-0051">Antiviral defense</keyword>
<keyword id="KW-0255">Endonuclease</keyword>
<keyword id="KW-0378">Hydrolase</keyword>
<keyword id="KW-0540">Nuclease</keyword>
<keyword id="KW-1185">Reference proteome</keyword>
<keyword id="KW-0694">RNA-binding</keyword>
<protein>
    <recommendedName>
        <fullName>CRISPR-associated endoribonuclease Cas6</fullName>
        <ecNumber>3.1.-.-</ecNumber>
    </recommendedName>
</protein>
<name>CAS6_PYRFU</name>
<feature type="chain" id="PRO_0000417970" description="CRISPR-associated endoribonuclease Cas6">
    <location>
        <begin position="1"/>
        <end position="264"/>
    </location>
</feature>
<feature type="active site" description="Proton acceptor" evidence="5">
    <location>
        <position position="31"/>
    </location>
</feature>
<feature type="active site" description="Proton donor" evidence="5">
    <location>
        <position position="46"/>
    </location>
</feature>
<feature type="site" description="Transition state stabilizer" evidence="5">
    <location>
        <position position="52"/>
    </location>
</feature>
<feature type="mutagenesis site" description="No RNA cleavage, binds pre-crRNA normally." evidence="2">
    <original>Y</original>
    <variation>A</variation>
    <location>
        <position position="31"/>
    </location>
</feature>
<feature type="mutagenesis site" description="No RNA cleavage, binds pre-crRNA normally." evidence="2">
    <original>H</original>
    <variation>A</variation>
    <location>
        <position position="46"/>
    </location>
</feature>
<feature type="mutagenesis site" description="40-fold reduction in RNA cleavage, binds pre-crRNA normally." evidence="2">
    <original>K</original>
    <variation>A</variation>
    <location>
        <position position="52"/>
    </location>
</feature>
<feature type="strand" evidence="6">
    <location>
        <begin position="2"/>
        <end position="14"/>
    </location>
</feature>
<feature type="strand" evidence="6">
    <location>
        <begin position="16"/>
        <end position="20"/>
    </location>
</feature>
<feature type="helix" evidence="6">
    <location>
        <begin position="23"/>
        <end position="37"/>
    </location>
</feature>
<feature type="helix" evidence="6">
    <location>
        <begin position="39"/>
        <end position="47"/>
    </location>
</feature>
<feature type="strand" evidence="6">
    <location>
        <begin position="53"/>
        <end position="56"/>
    </location>
</feature>
<feature type="strand" evidence="6">
    <location>
        <begin position="60"/>
        <end position="63"/>
    </location>
</feature>
<feature type="strand" evidence="6">
    <location>
        <begin position="71"/>
        <end position="86"/>
    </location>
</feature>
<feature type="helix" evidence="6">
    <location>
        <begin position="88"/>
        <end position="100"/>
    </location>
</feature>
<feature type="strand" evidence="6">
    <location>
        <begin position="103"/>
        <end position="106"/>
    </location>
</feature>
<feature type="strand" evidence="6">
    <location>
        <begin position="109"/>
        <end position="118"/>
    </location>
</feature>
<feature type="strand" evidence="6">
    <location>
        <begin position="129"/>
        <end position="134"/>
    </location>
</feature>
<feature type="helix" evidence="6">
    <location>
        <begin position="155"/>
        <end position="171"/>
    </location>
</feature>
<feature type="strand" evidence="6">
    <location>
        <begin position="172"/>
        <end position="175"/>
    </location>
</feature>
<feature type="strand" evidence="6">
    <location>
        <begin position="180"/>
        <end position="191"/>
    </location>
</feature>
<feature type="turn" evidence="7">
    <location>
        <begin position="195"/>
        <end position="197"/>
    </location>
</feature>
<feature type="strand" evidence="6">
    <location>
        <begin position="201"/>
        <end position="211"/>
    </location>
</feature>
<feature type="helix" evidence="6">
    <location>
        <begin position="213"/>
        <end position="222"/>
    </location>
</feature>
<feature type="strand" evidence="6">
    <location>
        <begin position="224"/>
        <end position="226"/>
    </location>
</feature>
<feature type="helix" evidence="6">
    <location>
        <begin position="228"/>
        <end position="230"/>
    </location>
</feature>
<feature type="strand" evidence="6">
    <location>
        <begin position="235"/>
        <end position="237"/>
    </location>
</feature>
<proteinExistence type="evidence at protein level"/>
<comment type="function">
    <text evidence="1 2">CRISPR (clustered regularly interspaced short palindromic repeat), is an adaptive immune system that provides protection against mobile genetic elements (viruses, transposable elements and conjugative plasmids). CRISPR clusters contain sequences complementary to antecedent mobile elements and target invading nucleic acids. CRISPR clusters are transcribed and processed into CRISPR RNA (crRNA), also called psiRNA (prokaryotic silencing) in this organism. This protein processes pre-crRNA into individual crRNA units, with an 8-nt 5'-repeat DNA tag that may help other proteins recognize the crRNA. Further processing occurs at their 3' termini in this organism. Generates a 5'-hydroxy and 2',3'-cyclic phosphodiester.</text>
</comment>
<comment type="cofactor">
    <text evidence="1 2">Does not require a metal cofactor.</text>
</comment>
<comment type="biophysicochemical properties">
    <temperatureDependence>
        <text evidence="1">Optimum temperature is 70 degrees Celsius.</text>
    </temperatureDependence>
</comment>
<comment type="subunit">
    <text evidence="3">Monomer, binds precursor but not mature crRNA; is not part of the Cmr effector complex.</text>
</comment>
<comment type="similarity">
    <text evidence="4">Belongs to the CRISPR-associated protein Cas6/Cse3/CasE family.</text>
</comment>
<sequence length="264" mass="30704">MRFLIRLVPEDKDRAFKVPYNHQYYLQGLIYNAIKSSNPKLATYLHEVKGPKLFTYSLFMAEKREHPKGLPYFLGYKKGFFYFSTCVPEIAEALVNGLLMNPEVRLWDERFYLHEIKVLREPKKFNGSTFVTLSPIAVTVVRKGKSYDVPPMEKEFYSIIKDDLQDKYVMAYGDKPPSEFEMEVLIAKPKRFRIKPGIYQTAWHLVFRAYGNDDLLKVGYEVGFGEKNSLGFGMVKVEGNKTTKEAEEQEKITFNSREELKTGV</sequence>
<accession>Q8U1S4</accession>